<dbReference type="EMBL" id="AE001363">
    <property type="protein sequence ID" value="AAD19210.1"/>
    <property type="molecule type" value="Genomic_DNA"/>
</dbReference>
<dbReference type="EMBL" id="AE002161">
    <property type="protein sequence ID" value="AAF38575.1"/>
    <property type="molecule type" value="Genomic_DNA"/>
</dbReference>
<dbReference type="EMBL" id="BA000008">
    <property type="protein sequence ID" value="BAA99280.1"/>
    <property type="molecule type" value="Genomic_DNA"/>
</dbReference>
<dbReference type="EMBL" id="AE009440">
    <property type="protein sequence ID" value="AAP99046.1"/>
    <property type="molecule type" value="Genomic_DNA"/>
</dbReference>
<dbReference type="PIR" id="C72001">
    <property type="entry name" value="C72001"/>
</dbReference>
<dbReference type="PIR" id="F86624">
    <property type="entry name" value="F86624"/>
</dbReference>
<dbReference type="RefSeq" id="NP_225267.1">
    <property type="nucleotide sequence ID" value="NC_000922.1"/>
</dbReference>
<dbReference type="RefSeq" id="WP_010883706.1">
    <property type="nucleotide sequence ID" value="NZ_LN847257.1"/>
</dbReference>
<dbReference type="STRING" id="406984.CPK_ORF00500"/>
<dbReference type="GeneID" id="45051130"/>
<dbReference type="KEGG" id="cpa:CP_0776"/>
<dbReference type="KEGG" id="cpj:CPj1073"/>
<dbReference type="KEGG" id="cpn:CPn_1073"/>
<dbReference type="KEGG" id="cpt:CpB1118"/>
<dbReference type="PATRIC" id="fig|115713.3.peg.1174"/>
<dbReference type="eggNOG" id="COG0546">
    <property type="taxonomic scope" value="Bacteria"/>
</dbReference>
<dbReference type="HOGENOM" id="CLU_1014501_0_0_0"/>
<dbReference type="OrthoDB" id="17512at2"/>
<dbReference type="Proteomes" id="UP000000583">
    <property type="component" value="Chromosome"/>
</dbReference>
<dbReference type="Proteomes" id="UP000000801">
    <property type="component" value="Chromosome"/>
</dbReference>
<dbReference type="GO" id="GO:0009279">
    <property type="term" value="C:cell outer membrane"/>
    <property type="evidence" value="ECO:0007669"/>
    <property type="project" value="UniProtKB-SubCell"/>
</dbReference>
<dbReference type="InterPro" id="IPR022565">
    <property type="entry name" value="DUF2608"/>
</dbReference>
<dbReference type="Pfam" id="PF11019">
    <property type="entry name" value="DUF2608"/>
    <property type="match status" value="1"/>
</dbReference>
<keyword id="KW-0998">Cell outer membrane</keyword>
<keyword id="KW-0472">Membrane</keyword>
<keyword id="KW-0732">Signal</keyword>
<organism>
    <name type="scientific">Chlamydia pneumoniae</name>
    <name type="common">Chlamydophila pneumoniae</name>
    <dbReference type="NCBI Taxonomy" id="83558"/>
    <lineage>
        <taxon>Bacteria</taxon>
        <taxon>Pseudomonadati</taxon>
        <taxon>Chlamydiota</taxon>
        <taxon>Chlamydiia</taxon>
        <taxon>Chlamydiales</taxon>
        <taxon>Chlamydiaceae</taxon>
        <taxon>Chlamydia/Chlamydophila group</taxon>
        <taxon>Chlamydia</taxon>
    </lineage>
</organism>
<proteinExistence type="inferred from homology"/>
<reference key="1">
    <citation type="journal article" date="1999" name="Nat. Genet.">
        <title>Comparative genomes of Chlamydia pneumoniae and C. trachomatis.</title>
        <authorList>
            <person name="Kalman S."/>
            <person name="Mitchell W.P."/>
            <person name="Marathe R."/>
            <person name="Lammel C.J."/>
            <person name="Fan J."/>
            <person name="Hyman R.W."/>
            <person name="Olinger L."/>
            <person name="Grimwood J."/>
            <person name="Davis R.W."/>
            <person name="Stephens R.S."/>
        </authorList>
    </citation>
    <scope>NUCLEOTIDE SEQUENCE [LARGE SCALE GENOMIC DNA]</scope>
    <source>
        <strain>CWL029</strain>
    </source>
</reference>
<reference key="2">
    <citation type="journal article" date="2000" name="Nucleic Acids Res.">
        <title>Genome sequences of Chlamydia trachomatis MoPn and Chlamydia pneumoniae AR39.</title>
        <authorList>
            <person name="Read T.D."/>
            <person name="Brunham R.C."/>
            <person name="Shen C."/>
            <person name="Gill S.R."/>
            <person name="Heidelberg J.F."/>
            <person name="White O."/>
            <person name="Hickey E.K."/>
            <person name="Peterson J.D."/>
            <person name="Utterback T.R."/>
            <person name="Berry K.J."/>
            <person name="Bass S."/>
            <person name="Linher K.D."/>
            <person name="Weidman J.F."/>
            <person name="Khouri H.M."/>
            <person name="Craven B."/>
            <person name="Bowman C."/>
            <person name="Dodson R.J."/>
            <person name="Gwinn M.L."/>
            <person name="Nelson W.C."/>
            <person name="DeBoy R.T."/>
            <person name="Kolonay J.F."/>
            <person name="McClarty G."/>
            <person name="Salzberg S.L."/>
            <person name="Eisen J.A."/>
            <person name="Fraser C.M."/>
        </authorList>
    </citation>
    <scope>NUCLEOTIDE SEQUENCE [LARGE SCALE GENOMIC DNA]</scope>
    <source>
        <strain>AR39</strain>
    </source>
</reference>
<reference key="3">
    <citation type="journal article" date="2000" name="Nucleic Acids Res.">
        <title>Comparison of whole genome sequences of Chlamydia pneumoniae J138 from Japan and CWL029 from USA.</title>
        <authorList>
            <person name="Shirai M."/>
            <person name="Hirakawa H."/>
            <person name="Kimoto M."/>
            <person name="Tabuchi M."/>
            <person name="Kishi F."/>
            <person name="Ouchi K."/>
            <person name="Shiba T."/>
            <person name="Ishii K."/>
            <person name="Hattori M."/>
            <person name="Kuhara S."/>
            <person name="Nakazawa T."/>
        </authorList>
    </citation>
    <scope>NUCLEOTIDE SEQUENCE [LARGE SCALE GENOMIC DNA]</scope>
    <source>
        <strain>J138</strain>
    </source>
</reference>
<reference key="4">
    <citation type="submission" date="2002-05" db="EMBL/GenBank/DDBJ databases">
        <title>The genome sequence of Chlamydia pneumoniae TW183 and comparison with other Chlamydia strains based on whole genome sequence analysis.</title>
        <authorList>
            <person name="Geng M.M."/>
            <person name="Schuhmacher A."/>
            <person name="Muehldorfer I."/>
            <person name="Bensch K.W."/>
            <person name="Schaefer K.P."/>
            <person name="Schneider S."/>
            <person name="Pohl T."/>
            <person name="Essig A."/>
            <person name="Marre R."/>
            <person name="Melchers K."/>
        </authorList>
    </citation>
    <scope>NUCLEOTIDE SEQUENCE [LARGE SCALE GENOMIC DNA]</scope>
    <source>
        <strain>TW-183</strain>
    </source>
</reference>
<comment type="subcellular location">
    <subcellularLocation>
        <location evidence="2">Cell outer membrane</location>
        <topology evidence="2">Peripheral membrane protein</topology>
    </subcellularLocation>
</comment>
<protein>
    <recommendedName>
        <fullName>Putative outer membrane protein CPn_1073/CP_0776/CPj1073/CpB1118</fullName>
    </recommendedName>
</protein>
<evidence type="ECO:0000255" key="1"/>
<evidence type="ECO:0000305" key="2"/>
<gene>
    <name type="ordered locus">CPn_1073</name>
    <name type="ordered locus">CP_0776</name>
    <name type="ordered locus">CPj1073</name>
    <name type="ordered locus">CpB1118</name>
</gene>
<accession>Q9Z6I6</accession>
<feature type="signal peptide" evidence="1">
    <location>
        <begin position="1"/>
        <end position="21"/>
    </location>
</feature>
<feature type="chain" id="PRO_0000020163" description="Putative outer membrane protein CPn_1073/CP_0776/CPj1073/CpB1118">
    <location>
        <begin position="22"/>
        <end position="274"/>
    </location>
</feature>
<name>OMPZ_CHLPN</name>
<sequence>MRRYLFMVLALCLYRAAPLEAVVIKITDAQAVLKFAREKTLVCFNIEDTVVFPKQMVGQSAWLYNRELDLKTTLSEEQAREQAFLEWMGISFLVDYELVSANLRNVLTGLSLKRSWVLGISQRPVHLIKNTLRILRSFNIDFTSCPAICEDGWLSHPTKDTTFDQAMAIEKNILFVGSLKNGQPMDAALEVLLSGISSPPSQIIYVDQDAERLRSIGAFCKKANIYFIGMLYTPAKQRVESYNPKLTAIQWSQIRKNLSDEYYESLLSYVKSKG</sequence>